<feature type="chain" id="PRO_0000119005" description="Structural maintenance of chromosomes protein 3">
    <location>
        <begin position="1"/>
        <end position="1209"/>
    </location>
</feature>
<feature type="domain" description="SMC hinge">
    <location>
        <begin position="530"/>
        <end position="642"/>
    </location>
</feature>
<feature type="region of interest" description="Disordered" evidence="3">
    <location>
        <begin position="239"/>
        <end position="269"/>
    </location>
</feature>
<feature type="region of interest" description="Disordered" evidence="3">
    <location>
        <begin position="281"/>
        <end position="303"/>
    </location>
</feature>
<feature type="region of interest" description="Disordered" evidence="3">
    <location>
        <begin position="1061"/>
        <end position="1082"/>
    </location>
</feature>
<feature type="coiled-coil region" evidence="2">
    <location>
        <begin position="179"/>
        <end position="350"/>
    </location>
</feature>
<feature type="coiled-coil region" evidence="2">
    <location>
        <begin position="393"/>
        <end position="503"/>
    </location>
</feature>
<feature type="coiled-coil region" evidence="2">
    <location>
        <begin position="670"/>
        <end position="857"/>
    </location>
</feature>
<feature type="coiled-coil region" evidence="2">
    <location>
        <begin position="958"/>
        <end position="989"/>
    </location>
</feature>
<feature type="compositionally biased region" description="Polar residues" evidence="3">
    <location>
        <begin position="1064"/>
        <end position="1082"/>
    </location>
</feature>
<feature type="binding site" evidence="2">
    <location>
        <begin position="32"/>
        <end position="39"/>
    </location>
    <ligand>
        <name>ATP</name>
        <dbReference type="ChEBI" id="CHEBI:30616"/>
    </ligand>
</feature>
<feature type="modified residue" description="N6-acetyllysine" evidence="1">
    <location>
        <position position="113"/>
    </location>
</feature>
<feature type="modified residue" description="N6-acetyllysine" evidence="1">
    <location>
        <position position="114"/>
    </location>
</feature>
<feature type="sequence conflict" description="In Ref. 2; AAC26808." evidence="6" ref="2">
    <original>KAT</original>
    <variation>RPL</variation>
    <location>
        <begin position="1052"/>
        <end position="1054"/>
    </location>
</feature>
<feature type="sequence conflict" description="In Ref. 2; AAC26808." evidence="6" ref="2">
    <original>T</original>
    <variation>A</variation>
    <location>
        <position position="1075"/>
    </location>
</feature>
<feature type="sequence conflict" description="In Ref. 2; AAC26808." evidence="6" ref="2">
    <original>V</original>
    <variation>F</variation>
    <location>
        <position position="1082"/>
    </location>
</feature>
<feature type="sequence conflict" description="In Ref. 2; AAC26808." evidence="6" ref="2">
    <original>G</original>
    <variation>R</variation>
    <location>
        <position position="1109"/>
    </location>
</feature>
<feature type="sequence conflict" description="In Ref. 2; AAC26808." evidence="6" ref="2">
    <original>A</original>
    <variation>R</variation>
    <location>
        <position position="1118"/>
    </location>
</feature>
<feature type="strand" evidence="7">
    <location>
        <begin position="108"/>
        <end position="110"/>
    </location>
</feature>
<sequence>MYIKQVIIQGFRSYRDQTIVDPFSSKHNVIVGRNGSGKSNFFYAIQFVLSDEFSHLRPEQRLALLHEGTGPRVISAFVEIIFDNSDNRLPIDKEEVSLRRVIGAKKDQYFLDKKMVTKNDVMNLLESAGFSRSNPYYIVKQGKINQMATAPDSQRLKLLREVAGTRVYDERKEESISLMKETEGKRDKINELLKYIEERLHTLEEEKEELAQYQKWDKMRRALEYTIYNQELNETRAKLDELSSKRETSGEKSRQLRDAQQDARDKMEEIERQVRELKSKISAMKEEKEQLSSERQEQIKQRTKLELKTKDLQDELAGNSEQRKRLLKERQKLLEKIEEKQKELAETEPKFSSVKQKEESGIARLAQATQERTDLYAKQGRGSQFTSKEERDKWIKKELKSLDQAINDKKRQIAAINKDLEETEVNKEKNLEQYTKLDQDLNEVKTRVEELDKKYYEVKNKKDELQSERNYLWREENAEQQSLAAKREDLEKKQQLLRAATGKAILNGIDSINKVLEHFRRKGINQHVINGYHGIVMNNFDCEPAFYTCVEVTAGNRLFYHIVESDEVSTKILMEFNKMNLPGEVTFLPLNKLDVRDTAYPETNDAIPMISKLRYNLRFDKAFKHVFGKTLICRSMEVSTQLARAFTMDCITLEGDQVSHRGALTGGYYDTRKSRLELQKDVRKVEDELHALEAKLNENLRRNIERINNEIDQLMNQMQQIETQQRKFKASRDSILSEMKMLKEKRQQSEKTFMPKQRSLQSLEASLHAMESTRESLKAELGTDLLSQLSLEDQKRVDALNDEIRQLQQENRQLLNERIKLEGTITRVETYLNENLRKRLDQVEQELNELRETEGGTVLTATTSELEAINKRVKDTLARSEGLDITIDKTEVESKDLVKSMDRWKNMEKDHMDAINHDTKELEKMTNRQGMLLKKKEECMKKIRELGSLPQEAFEKYQTLSLKQLFRKLEQCNTELKKYSHVNKKALDQFVNFSEQKEKLIKRQEELDRGHKSIMELMNVLELRKYEAIQLTFKQVSKNFSEVFQKLVPGGKATLVMKKGDVEGSQSQDEGEGSTQSSVPSVDQFTGVGIRVSFTGKQAEMREMQQLSGGQKSLVALALIFAIQKCDPAPFYLFDEIDQALDAQHRKAVSDMIMELASHAQFITTTFRPELLESADKFYGVKFRNKVSHIDVITAEQAKDFVEDDTTHG</sequence>
<keyword id="KW-0002">3D-structure</keyword>
<keyword id="KW-0007">Acetylation</keyword>
<keyword id="KW-0067">ATP-binding</keyword>
<keyword id="KW-0131">Cell cycle</keyword>
<keyword id="KW-0132">Cell division</keyword>
<keyword id="KW-0137">Centromere</keyword>
<keyword id="KW-0158">Chromosome</keyword>
<keyword id="KW-0175">Coiled coil</keyword>
<keyword id="KW-0227">DNA damage</keyword>
<keyword id="KW-0234">DNA repair</keyword>
<keyword id="KW-0469">Meiosis</keyword>
<keyword id="KW-0498">Mitosis</keyword>
<keyword id="KW-0547">Nucleotide-binding</keyword>
<keyword id="KW-0539">Nucleus</keyword>
<keyword id="KW-1185">Reference proteome</keyword>
<evidence type="ECO:0000250" key="1"/>
<evidence type="ECO:0000255" key="2"/>
<evidence type="ECO:0000256" key="3">
    <source>
        <dbReference type="SAM" id="MobiDB-lite"/>
    </source>
</evidence>
<evidence type="ECO:0000269" key="4">
    <source>
    </source>
</evidence>
<evidence type="ECO:0000269" key="5">
    <source>
    </source>
</evidence>
<evidence type="ECO:0000305" key="6"/>
<evidence type="ECO:0007829" key="7">
    <source>
        <dbReference type="PDB" id="5N22"/>
    </source>
</evidence>
<dbReference type="EMBL" id="BC094474">
    <property type="protein sequence ID" value="AAH94474.1"/>
    <property type="molecule type" value="mRNA"/>
</dbReference>
<dbReference type="EMBL" id="AF051785">
    <property type="protein sequence ID" value="AAC26808.1"/>
    <property type="molecule type" value="mRNA"/>
</dbReference>
<dbReference type="PDB" id="5N1W">
    <property type="method" value="X-ray"/>
    <property type="resolution" value="2.30 A"/>
    <property type="chains" value="C/D=101-106"/>
</dbReference>
<dbReference type="PDB" id="5N22">
    <property type="method" value="X-ray"/>
    <property type="resolution" value="1.99 A"/>
    <property type="chains" value="E/G/J/L=99-111"/>
</dbReference>
<dbReference type="PDBsum" id="5N1W"/>
<dbReference type="PDBsum" id="5N22"/>
<dbReference type="SMR" id="O93309"/>
<dbReference type="IntAct" id="O93309">
    <property type="interactions" value="8"/>
</dbReference>
<dbReference type="OrthoDB" id="431497at2759"/>
<dbReference type="Proteomes" id="UP000186698">
    <property type="component" value="Unplaced"/>
</dbReference>
<dbReference type="GO" id="GO:0000785">
    <property type="term" value="C:chromatin"/>
    <property type="evidence" value="ECO:0000250"/>
    <property type="project" value="UniProtKB"/>
</dbReference>
<dbReference type="GO" id="GO:0000775">
    <property type="term" value="C:chromosome, centromeric region"/>
    <property type="evidence" value="ECO:0007669"/>
    <property type="project" value="UniProtKB-SubCell"/>
</dbReference>
<dbReference type="GO" id="GO:0030893">
    <property type="term" value="C:meiotic cohesin complex"/>
    <property type="evidence" value="ECO:0000250"/>
    <property type="project" value="UniProtKB"/>
</dbReference>
<dbReference type="GO" id="GO:0030892">
    <property type="term" value="C:mitotic cohesin complex"/>
    <property type="evidence" value="ECO:0000318"/>
    <property type="project" value="GO_Central"/>
</dbReference>
<dbReference type="GO" id="GO:0005634">
    <property type="term" value="C:nucleus"/>
    <property type="evidence" value="ECO:0007669"/>
    <property type="project" value="UniProtKB-SubCell"/>
</dbReference>
<dbReference type="GO" id="GO:0005524">
    <property type="term" value="F:ATP binding"/>
    <property type="evidence" value="ECO:0007669"/>
    <property type="project" value="UniProtKB-KW"/>
</dbReference>
<dbReference type="GO" id="GO:0016887">
    <property type="term" value="F:ATP hydrolysis activity"/>
    <property type="evidence" value="ECO:0007669"/>
    <property type="project" value="InterPro"/>
</dbReference>
<dbReference type="GO" id="GO:0003690">
    <property type="term" value="F:double-stranded DNA binding"/>
    <property type="evidence" value="ECO:0000318"/>
    <property type="project" value="GO_Central"/>
</dbReference>
<dbReference type="GO" id="GO:0051301">
    <property type="term" value="P:cell division"/>
    <property type="evidence" value="ECO:0007669"/>
    <property type="project" value="UniProtKB-KW"/>
</dbReference>
<dbReference type="GO" id="GO:0006281">
    <property type="term" value="P:DNA repair"/>
    <property type="evidence" value="ECO:0007669"/>
    <property type="project" value="UniProtKB-KW"/>
</dbReference>
<dbReference type="GO" id="GO:0051321">
    <property type="term" value="P:meiotic cell cycle"/>
    <property type="evidence" value="ECO:0007669"/>
    <property type="project" value="UniProtKB-KW"/>
</dbReference>
<dbReference type="GO" id="GO:0007064">
    <property type="term" value="P:mitotic sister chromatid cohesion"/>
    <property type="evidence" value="ECO:0000318"/>
    <property type="project" value="GO_Central"/>
</dbReference>
<dbReference type="GO" id="GO:0006275">
    <property type="term" value="P:regulation of DNA replication"/>
    <property type="evidence" value="ECO:0000250"/>
    <property type="project" value="UniProtKB"/>
</dbReference>
<dbReference type="CDD" id="cd03272">
    <property type="entry name" value="ABC_SMC3_euk"/>
    <property type="match status" value="1"/>
</dbReference>
<dbReference type="FunFam" id="1.20.1060.20:FF:000002">
    <property type="entry name" value="Structural maintenance of chromosomes 3"/>
    <property type="match status" value="1"/>
</dbReference>
<dbReference type="FunFam" id="3.30.70.1620:FF:000002">
    <property type="entry name" value="Structural maintenance of chromosomes 3"/>
    <property type="match status" value="1"/>
</dbReference>
<dbReference type="FunFam" id="3.40.50.300:FF:000370">
    <property type="entry name" value="Structural maintenance of chromosomes 3"/>
    <property type="match status" value="1"/>
</dbReference>
<dbReference type="FunFam" id="3.40.50.300:FF:000424">
    <property type="entry name" value="Structural maintenance of chromosomes 3"/>
    <property type="match status" value="1"/>
</dbReference>
<dbReference type="Gene3D" id="1.10.287.1490">
    <property type="match status" value="1"/>
</dbReference>
<dbReference type="Gene3D" id="1.20.1060.20">
    <property type="match status" value="1"/>
</dbReference>
<dbReference type="Gene3D" id="3.30.70.1620">
    <property type="match status" value="1"/>
</dbReference>
<dbReference type="Gene3D" id="3.40.50.300">
    <property type="entry name" value="P-loop containing nucleotide triphosphate hydrolases"/>
    <property type="match status" value="2"/>
</dbReference>
<dbReference type="InterPro" id="IPR027417">
    <property type="entry name" value="P-loop_NTPase"/>
</dbReference>
<dbReference type="InterPro" id="IPR003395">
    <property type="entry name" value="RecF/RecN/SMC_N"/>
</dbReference>
<dbReference type="InterPro" id="IPR024704">
    <property type="entry name" value="SMC"/>
</dbReference>
<dbReference type="InterPro" id="IPR041741">
    <property type="entry name" value="SMC3_ABC_euk"/>
</dbReference>
<dbReference type="InterPro" id="IPR010935">
    <property type="entry name" value="SMC_hinge"/>
</dbReference>
<dbReference type="InterPro" id="IPR036277">
    <property type="entry name" value="SMC_hinge_sf"/>
</dbReference>
<dbReference type="PANTHER" id="PTHR43977">
    <property type="entry name" value="STRUCTURAL MAINTENANCE OF CHROMOSOMES PROTEIN 3"/>
    <property type="match status" value="1"/>
</dbReference>
<dbReference type="Pfam" id="PF06470">
    <property type="entry name" value="SMC_hinge"/>
    <property type="match status" value="1"/>
</dbReference>
<dbReference type="Pfam" id="PF02463">
    <property type="entry name" value="SMC_N"/>
    <property type="match status" value="1"/>
</dbReference>
<dbReference type="PIRSF" id="PIRSF005719">
    <property type="entry name" value="SMC"/>
    <property type="match status" value="1"/>
</dbReference>
<dbReference type="SMART" id="SM00968">
    <property type="entry name" value="SMC_hinge"/>
    <property type="match status" value="1"/>
</dbReference>
<dbReference type="SUPFAM" id="SSF52540">
    <property type="entry name" value="P-loop containing nucleoside triphosphate hydrolases"/>
    <property type="match status" value="1"/>
</dbReference>
<dbReference type="SUPFAM" id="SSF75553">
    <property type="entry name" value="Smc hinge domain"/>
    <property type="match status" value="1"/>
</dbReference>
<accession>O93309</accession>
<accession>Q505N2</accession>
<comment type="function">
    <text evidence="5">Central component of cohesin, a complex required for chromosome cohesion during the cell cycle. The cohesin complex may form a large proteinaceous ring within which sister chromatids can be trapped. At anaphase, the complex is cleaved and dissociates from chromatin, allowing sister chromatids to segregate. Cohesion is coupled to DNA replication and is involved in DNA repair. The cohesin complex also plays an important role in spindle pole assembly during mitosis and in chromosomes movement.</text>
</comment>
<comment type="subunit">
    <text evidence="4 5">Forms a heterodimer with SMC1 in cohesin complex. The cohesin complex is composed of the SMC1 and SMC3 heterodimer attached via their SMC hinge domain, RAD21 which link them, and one STAG protein (STAG1 or STAG2), which interacts with RAD21.</text>
</comment>
<comment type="interaction">
    <interactant intactId="EBI-80653">
        <id>O93309</id>
    </interactant>
    <interactant intactId="EBI-1386928">
        <id>Q4QXM3</id>
        <label>pds5a-a</label>
    </interactant>
    <organismsDiffer>false</organismsDiffer>
    <experiments>2</experiments>
</comment>
<comment type="interaction">
    <interactant intactId="EBI-80653">
        <id>O93309</id>
    </interactant>
    <interactant intactId="EBI-80622">
        <id>Q9DGN1</id>
        <label>stag1</label>
    </interactant>
    <organismsDiffer>false</organismsDiffer>
    <experiments>2</experiments>
</comment>
<comment type="interaction">
    <interactant intactId="EBI-80653">
        <id>O93309</id>
    </interactant>
    <interactant intactId="EBI-80675">
        <id>Q9DGN0</id>
        <label>stag2</label>
    </interactant>
    <organismsDiffer>false</organismsDiffer>
    <experiments>2</experiments>
</comment>
<comment type="subcellular location">
    <subcellularLocation>
        <location evidence="5">Nucleus</location>
    </subcellularLocation>
    <subcellularLocation>
        <location evidence="5">Chromosome</location>
    </subcellularLocation>
    <subcellularLocation>
        <location evidence="5">Chromosome</location>
        <location evidence="5">Centromere</location>
    </subcellularLocation>
    <text>Associates with chromatin. Before prophase it is scattered along chromosome arms. During prophase, most of cohesin complexes dissociate from chromatin probably because of phosphorylation by PLK, except at centromeres, where cohesin complexes remain. At anaphase, the RAD21 subunit of the cohesin complex is cleaved, leading to the dissociation of the complex from chromosomes, allowing chromosome separation.</text>
</comment>
<comment type="domain">
    <text evidence="1">The flexible SMC hinge domain, which separates the large intramolecular coiled coil regions, allows the heterotypic interaction with the corresponding domain of SMC3, forming a V-shaped heterodimer. The two heads of the heterodimer are then connected by different ends of the cleavable RAD21 protein, forming a ring structure (By similarity).</text>
</comment>
<comment type="PTM">
    <text evidence="1">Acetylation at Lys-113 and Lys-114 by ESCO1 is important for genome stability and S phase sister chromatid cohesion.</text>
</comment>
<comment type="similarity">
    <text evidence="6">Belongs to the SMC family. SMC3 subfamily.</text>
</comment>
<comment type="caution">
    <text evidence="6">Was originally isolated as a proteoglycan protein. Although not excluded, such secreted function is not clear.</text>
</comment>
<protein>
    <recommendedName>
        <fullName>Structural maintenance of chromosomes protein 3</fullName>
        <shortName>SMC protein 3</shortName>
        <shortName>SMC-3</shortName>
    </recommendedName>
</protein>
<name>SMC3_XENLA</name>
<organism>
    <name type="scientific">Xenopus laevis</name>
    <name type="common">African clawed frog</name>
    <dbReference type="NCBI Taxonomy" id="8355"/>
    <lineage>
        <taxon>Eukaryota</taxon>
        <taxon>Metazoa</taxon>
        <taxon>Chordata</taxon>
        <taxon>Craniata</taxon>
        <taxon>Vertebrata</taxon>
        <taxon>Euteleostomi</taxon>
        <taxon>Amphibia</taxon>
        <taxon>Batrachia</taxon>
        <taxon>Anura</taxon>
        <taxon>Pipoidea</taxon>
        <taxon>Pipidae</taxon>
        <taxon>Xenopodinae</taxon>
        <taxon>Xenopus</taxon>
        <taxon>Xenopus</taxon>
    </lineage>
</organism>
<reference key="1">
    <citation type="submission" date="2005-05" db="EMBL/GenBank/DDBJ databases">
        <authorList>
            <consortium name="NIH - Xenopus Gene Collection (XGC) project"/>
        </authorList>
    </citation>
    <scope>NUCLEOTIDE SEQUENCE [LARGE SCALE MRNA]</scope>
    <source>
        <tissue>Embryo</tissue>
    </source>
</reference>
<reference key="2">
    <citation type="journal article" date="1998" name="Genes Dev.">
        <title>Identification of Xenopus SMC protein complexes required for sister chromatid cohesion.</title>
        <authorList>
            <person name="Losada A."/>
            <person name="Hirano M."/>
            <person name="Hirano T."/>
        </authorList>
    </citation>
    <scope>NUCLEOTIDE SEQUENCE [MRNA] OF 976-1209</scope>
    <scope>FUNCTION</scope>
    <scope>SUBCELLULAR LOCATION</scope>
    <scope>IDENTIFICATION IN A COHESIN COMPLEX WITH SMC1 AND RAD21</scope>
</reference>
<reference key="3">
    <citation type="journal article" date="2000" name="J. Cell Biol.">
        <title>Identification and characterization of SA/Scc3p subunits in the Xenopus and human cohesin complexes.</title>
        <authorList>
            <person name="Losada A."/>
            <person name="Yokochi T."/>
            <person name="Kobayashi R."/>
            <person name="Hirano T."/>
        </authorList>
    </citation>
    <scope>IDENTIFICATION IN A COHESIN COMPLEX WITH SMC1; RAD21; STAG1 OR STAG2</scope>
</reference>
<gene>
    <name type="primary">smc3</name>
    <name type="synonym">smc3l1</name>
</gene>
<proteinExistence type="evidence at protein level"/>